<accession>Q4R4A8</accession>
<name>MGT4C_MACFA</name>
<dbReference type="EC" id="2.4.1.145"/>
<dbReference type="EMBL" id="AB179007">
    <property type="protein sequence ID" value="BAE02058.1"/>
    <property type="molecule type" value="mRNA"/>
</dbReference>
<dbReference type="RefSeq" id="NP_001270014.1">
    <property type="nucleotide sequence ID" value="NM_001283085.1"/>
</dbReference>
<dbReference type="RefSeq" id="XP_015286134.1">
    <property type="nucleotide sequence ID" value="XM_015430648.1"/>
</dbReference>
<dbReference type="RefSeq" id="XP_015286135.1">
    <property type="nucleotide sequence ID" value="XM_015430649.1"/>
</dbReference>
<dbReference type="RefSeq" id="XP_015286136.1">
    <property type="nucleotide sequence ID" value="XM_015430650.1"/>
</dbReference>
<dbReference type="RefSeq" id="XP_015286137.1">
    <property type="nucleotide sequence ID" value="XM_015430651.3"/>
</dbReference>
<dbReference type="RefSeq" id="XP_015286138.1">
    <property type="nucleotide sequence ID" value="XM_015430652.1"/>
</dbReference>
<dbReference type="RefSeq" id="XP_015286139.1">
    <property type="nucleotide sequence ID" value="XM_015430653.1"/>
</dbReference>
<dbReference type="RefSeq" id="XP_045221606.1">
    <property type="nucleotide sequence ID" value="XM_045365671.2"/>
</dbReference>
<dbReference type="RefSeq" id="XP_045221607.1">
    <property type="nucleotide sequence ID" value="XM_045365672.2"/>
</dbReference>
<dbReference type="RefSeq" id="XP_045221609.1">
    <property type="nucleotide sequence ID" value="XM_045365674.2"/>
</dbReference>
<dbReference type="RefSeq" id="XP_045221611.1">
    <property type="nucleotide sequence ID" value="XM_045365676.2"/>
</dbReference>
<dbReference type="RefSeq" id="XP_065380711.1">
    <property type="nucleotide sequence ID" value="XM_065524639.1"/>
</dbReference>
<dbReference type="RefSeq" id="XP_065380712.1">
    <property type="nucleotide sequence ID" value="XM_065524640.1"/>
</dbReference>
<dbReference type="SMR" id="Q4R4A8"/>
<dbReference type="STRING" id="9541.ENSMFAP00000026001"/>
<dbReference type="CAZy" id="GT54">
    <property type="family name" value="Glycosyltransferase Family 54"/>
</dbReference>
<dbReference type="GlyCosmos" id="Q4R4A8">
    <property type="glycosylation" value="2 sites, No reported glycans"/>
</dbReference>
<dbReference type="Ensembl" id="ENSMFAT00000034156.2">
    <property type="protein sequence ID" value="ENSMFAP00000026001.1"/>
    <property type="gene ID" value="ENSMFAG00000044473.2"/>
</dbReference>
<dbReference type="GeneID" id="101866242"/>
<dbReference type="CTD" id="25834"/>
<dbReference type="VEuPathDB" id="HostDB:ENSMFAG00000044473"/>
<dbReference type="eggNOG" id="KOG3656">
    <property type="taxonomic scope" value="Eukaryota"/>
</dbReference>
<dbReference type="GeneTree" id="ENSGT00940000155352"/>
<dbReference type="OMA" id="MTDVEHK"/>
<dbReference type="UniPathway" id="UPA00378"/>
<dbReference type="Proteomes" id="UP000233100">
    <property type="component" value="Chromosome 11"/>
</dbReference>
<dbReference type="Bgee" id="ENSMFAG00000044473">
    <property type="expression patterns" value="Expressed in frontal cortex and 3 other cell types or tissues"/>
</dbReference>
<dbReference type="GO" id="GO:0000139">
    <property type="term" value="C:Golgi membrane"/>
    <property type="evidence" value="ECO:0007669"/>
    <property type="project" value="UniProtKB-SubCell"/>
</dbReference>
<dbReference type="GO" id="GO:0008454">
    <property type="term" value="F:alpha-1,3-mannosylglycoprotein 4-beta-N-acetylglucosaminyltransferase activity"/>
    <property type="evidence" value="ECO:0007669"/>
    <property type="project" value="UniProtKB-EC"/>
</dbReference>
<dbReference type="GO" id="GO:0046872">
    <property type="term" value="F:metal ion binding"/>
    <property type="evidence" value="ECO:0007669"/>
    <property type="project" value="UniProtKB-KW"/>
</dbReference>
<dbReference type="GO" id="GO:0006487">
    <property type="term" value="P:protein N-linked glycosylation"/>
    <property type="evidence" value="ECO:0007669"/>
    <property type="project" value="TreeGrafter"/>
</dbReference>
<dbReference type="InterPro" id="IPR006759">
    <property type="entry name" value="Glyco_transf_54"/>
</dbReference>
<dbReference type="InterPro" id="IPR056576">
    <property type="entry name" value="MGAT4_A/B/C_C"/>
</dbReference>
<dbReference type="PANTHER" id="PTHR12062:SF14">
    <property type="entry name" value="ALPHA-1,3-MANNOSYL-GLYCOPROTEIN 4-BETA-N-ACETYLGLUCOSAMINYLTRANSFERASE C"/>
    <property type="match status" value="1"/>
</dbReference>
<dbReference type="PANTHER" id="PTHR12062">
    <property type="entry name" value="N-ACETYLGLUCOSAMINYLTRANSFERASE VI"/>
    <property type="match status" value="1"/>
</dbReference>
<dbReference type="Pfam" id="PF04666">
    <property type="entry name" value="MGAT4_cons"/>
    <property type="match status" value="1"/>
</dbReference>
<dbReference type="Pfam" id="PF23524">
    <property type="entry name" value="MGAT4A_C"/>
    <property type="match status" value="1"/>
</dbReference>
<protein>
    <recommendedName>
        <fullName>Alpha-1,3-mannosyl-glycoprotein 4-beta-N-acetylglucosaminyltransferase C</fullName>
        <ecNumber>2.4.1.145</ecNumber>
    </recommendedName>
    <alternativeName>
        <fullName>N-glycosyl-oligosaccharide-glycoprotein N-acetylglucosaminyltransferase IVc</fullName>
        <shortName>GnT-IVc</shortName>
        <shortName>N-acetylglucosaminyltransferase IVc</shortName>
    </alternativeName>
    <alternativeName>
        <fullName>UDP-N-acetylglucosamine: alpha-1,3-D-mannoside beta-1,4-N-acetylglucosaminyltransferase IVc</fullName>
    </alternativeName>
</protein>
<gene>
    <name type="primary">MGAT4C</name>
    <name type="ORF">QtsA-11376</name>
</gene>
<sequence>MFKFHQMKHIFEILDKMRCLRKRSTVSFLGVLVIFLLFMNLYIEDSYVLEGDKQLIRETSTHQLNSERYVHTFKDLSNFSGAINVTYRYLAATPLQRKRYLTIGLSSVKRKKGNYLLETIKSIFEQSSYEELKEISVVVHLADFNSSWRDAMVQDITQKFAHHIIAGRLMVIHAPEEYYPILDGLKRNYNDPEDRVKFRSKQNVDYAFLLNFCANTSDYYVMLEDDVRCSKNFLTAIKKVIASLEGTYWVTLEFSKLGYIGKLYHSHDLPRLAHFLLMFYQEMPCDWLLTHFRGLLAQKNVIRFKPSLFQHMGYYSSYKGTENKLKDDDFEEESFDIPDNPPASLYTNMNVFENYEASKAYSSVDEYFWGKPPSTGDVFVIVFENPIIIKKIKVNTGTEDRQNDILHHGALDVGENVMPSKRRRQCSTYLRLGEFKNGNFEMSGVNQKIPFDIHCMRIYVTKTQKEWLIIRSISIWTS</sequence>
<feature type="chain" id="PRO_0000288597" description="Alpha-1,3-mannosyl-glycoprotein 4-beta-N-acetylglucosaminyltransferase C">
    <location>
        <begin position="1"/>
        <end position="478"/>
    </location>
</feature>
<feature type="topological domain" description="Cytoplasmic" evidence="2">
    <location>
        <begin position="1"/>
        <end position="23"/>
    </location>
</feature>
<feature type="transmembrane region" description="Helical; Signal-anchor for type II membrane protein" evidence="2">
    <location>
        <begin position="24"/>
        <end position="44"/>
    </location>
</feature>
<feature type="topological domain" description="Lumenal" evidence="2">
    <location>
        <begin position="45"/>
        <end position="478"/>
    </location>
</feature>
<feature type="glycosylation site" description="N-linked (GlcNAc...) asparagine" evidence="2">
    <location>
        <position position="84"/>
    </location>
</feature>
<feature type="glycosylation site" description="N-linked (GlcNAc...) asparagine" evidence="2">
    <location>
        <position position="215"/>
    </location>
</feature>
<keyword id="KW-0325">Glycoprotein</keyword>
<keyword id="KW-0328">Glycosyltransferase</keyword>
<keyword id="KW-0333">Golgi apparatus</keyword>
<keyword id="KW-0472">Membrane</keyword>
<keyword id="KW-0479">Metal-binding</keyword>
<keyword id="KW-1185">Reference proteome</keyword>
<keyword id="KW-0735">Signal-anchor</keyword>
<keyword id="KW-0808">Transferase</keyword>
<keyword id="KW-0812">Transmembrane</keyword>
<keyword id="KW-1133">Transmembrane helix</keyword>
<organism>
    <name type="scientific">Macaca fascicularis</name>
    <name type="common">Crab-eating macaque</name>
    <name type="synonym">Cynomolgus monkey</name>
    <dbReference type="NCBI Taxonomy" id="9541"/>
    <lineage>
        <taxon>Eukaryota</taxon>
        <taxon>Metazoa</taxon>
        <taxon>Chordata</taxon>
        <taxon>Craniata</taxon>
        <taxon>Vertebrata</taxon>
        <taxon>Euteleostomi</taxon>
        <taxon>Mammalia</taxon>
        <taxon>Eutheria</taxon>
        <taxon>Euarchontoglires</taxon>
        <taxon>Primates</taxon>
        <taxon>Haplorrhini</taxon>
        <taxon>Catarrhini</taxon>
        <taxon>Cercopithecidae</taxon>
        <taxon>Cercopithecinae</taxon>
        <taxon>Macaca</taxon>
    </lineage>
</organism>
<proteinExistence type="evidence at transcript level"/>
<comment type="function">
    <text evidence="1">Glycosyltransferase that participates in the transfer of N-acetylglucosamine (GlcNAc) to the core mannose residues of N-linked glycans. Catalyzes the formation of the GlcNAcbeta1-4 branch on the GlcNAcbeta1-2Manalpha1-3 arm of the core structure of N-linked glycans. Essential for the production of tri- and tetra-antennary N-linked sugar chains. Does not catalyze the transfer of GlcNAc to the Manalpha1-6 arm to form GlcNAcBeta1-4Manalpha1-6 linkage ('GnT-VI' activity) (By similarity).</text>
</comment>
<comment type="catalytic activity">
    <reaction>
        <text>N(4)-{beta-D-GlcNAc-(1-&gt;2)-alpha-D-Man-(1-&gt;3)-[beta-D-GlcNAc-(1-&gt;2)-alpha-D-Man-(1-&gt;6)]-beta-D-Man-(1-&gt;4)-beta-D-GlcNAc-(1-&gt;4)-beta-D-GlcNAc}-L-asparaginyl-[protein] + UDP-N-acetyl-alpha-D-glucosamine = N(4)-{beta-D-GlcNAc-(1-&gt;2)-[beta-D-GlcNAc-(1-&gt;4)]-alpha-D-Man-(1-&gt;3)-[beta-D-GlcNAc-(1-&gt;2)-alpha-D-Man-(1-&gt;6)]-beta-D-Man-(1-&gt;4)-beta-D-GlcNAc-(1-&gt;4)-beta-D-GlcNAc}-L-asparaginyl-[protein] + UDP + H(+)</text>
        <dbReference type="Rhea" id="RHEA:16057"/>
        <dbReference type="Rhea" id="RHEA-COMP:13526"/>
        <dbReference type="Rhea" id="RHEA-COMP:14374"/>
        <dbReference type="ChEBI" id="CHEBI:15378"/>
        <dbReference type="ChEBI" id="CHEBI:57705"/>
        <dbReference type="ChEBI" id="CHEBI:58223"/>
        <dbReference type="ChEBI" id="CHEBI:60651"/>
        <dbReference type="ChEBI" id="CHEBI:139507"/>
        <dbReference type="EC" id="2.4.1.145"/>
    </reaction>
</comment>
<comment type="cofactor">
    <cofactor evidence="1">
        <name>a divalent metal cation</name>
        <dbReference type="ChEBI" id="CHEBI:60240"/>
    </cofactor>
</comment>
<comment type="pathway">
    <text>Protein modification; protein glycosylation.</text>
</comment>
<comment type="subcellular location">
    <subcellularLocation>
        <location evidence="1">Golgi apparatus membrane</location>
        <topology evidence="1">Single-pass type II membrane protein</topology>
    </subcellularLocation>
</comment>
<comment type="similarity">
    <text evidence="3">Belongs to the glycosyltransferase 54 family.</text>
</comment>
<evidence type="ECO:0000250" key="1"/>
<evidence type="ECO:0000255" key="2"/>
<evidence type="ECO:0000305" key="3"/>
<reference key="1">
    <citation type="submission" date="2005-06" db="EMBL/GenBank/DDBJ databases">
        <title>DNA sequences of macaque genes expressed in brain or testis and its evolutionary implications.</title>
        <authorList>
            <consortium name="International consortium for macaque cDNA sequencing and analysis"/>
        </authorList>
    </citation>
    <scope>NUCLEOTIDE SEQUENCE [LARGE SCALE MRNA]</scope>
    <source>
        <tissue>Testis</tissue>
    </source>
</reference>